<keyword id="KW-0560">Oxidoreductase</keyword>
<keyword id="KW-0884">PQQ biosynthesis</keyword>
<proteinExistence type="inferred from homology"/>
<comment type="function">
    <text evidence="1">Ring cyclization and eight-electron oxidation of 3a-(2-amino-2-carboxyethyl)-4,5-dioxo-4,5,6,7,8,9-hexahydroquinoline-7,9-dicarboxylic-acid to PQQ.</text>
</comment>
<comment type="catalytic activity">
    <reaction evidence="1">
        <text>6-(2-amino-2-carboxyethyl)-7,8-dioxo-1,2,3,4,7,8-hexahydroquinoline-2,4-dicarboxylate + 3 O2 = pyrroloquinoline quinone + 2 H2O2 + 2 H2O + H(+)</text>
        <dbReference type="Rhea" id="RHEA:10692"/>
        <dbReference type="ChEBI" id="CHEBI:15377"/>
        <dbReference type="ChEBI" id="CHEBI:15378"/>
        <dbReference type="ChEBI" id="CHEBI:15379"/>
        <dbReference type="ChEBI" id="CHEBI:16240"/>
        <dbReference type="ChEBI" id="CHEBI:58442"/>
        <dbReference type="ChEBI" id="CHEBI:58778"/>
        <dbReference type="EC" id="1.3.3.11"/>
    </reaction>
</comment>
<comment type="pathway">
    <text evidence="1">Cofactor biosynthesis; pyrroloquinoline quinone biosynthesis.</text>
</comment>
<comment type="similarity">
    <text evidence="1">Belongs to the PqqC family.</text>
</comment>
<evidence type="ECO:0000255" key="1">
    <source>
        <dbReference type="HAMAP-Rule" id="MF_00654"/>
    </source>
</evidence>
<gene>
    <name evidence="1" type="primary">pqqC</name>
    <name type="ordered locus">RSKD131_2154</name>
</gene>
<reference key="1">
    <citation type="journal article" date="2009" name="J. Bacteriol.">
        <title>Complete genome sequence of Rhodobacter sphaeroides KD131.</title>
        <authorList>
            <person name="Lim S.-K."/>
            <person name="Kim S.J."/>
            <person name="Cha S.H."/>
            <person name="Oh Y.-K."/>
            <person name="Rhee H.-J."/>
            <person name="Kim M.-S."/>
            <person name="Lee J.K."/>
        </authorList>
    </citation>
    <scope>NUCLEOTIDE SEQUENCE [LARGE SCALE GENOMIC DNA]</scope>
    <source>
        <strain>KD131 / KCTC 12085</strain>
    </source>
</reference>
<accession>B9KMC3</accession>
<name>PQQC_CERSK</name>
<feature type="chain" id="PRO_1000147522" description="Pyrroloquinoline-quinone synthase">
    <location>
        <begin position="1"/>
        <end position="255"/>
    </location>
</feature>
<protein>
    <recommendedName>
        <fullName evidence="1">Pyrroloquinoline-quinone synthase</fullName>
        <ecNumber evidence="1">1.3.3.11</ecNumber>
    </recommendedName>
    <alternativeName>
        <fullName evidence="1">Coenzyme PQQ synthesis protein C</fullName>
    </alternativeName>
    <alternativeName>
        <fullName evidence="1">Pyrroloquinoline quinone biosynthesis protein C</fullName>
    </alternativeName>
</protein>
<dbReference type="EC" id="1.3.3.11" evidence="1"/>
<dbReference type="EMBL" id="CP001150">
    <property type="protein sequence ID" value="ACM02014.1"/>
    <property type="molecule type" value="Genomic_DNA"/>
</dbReference>
<dbReference type="RefSeq" id="WP_015921221.1">
    <property type="nucleotide sequence ID" value="NC_011963.1"/>
</dbReference>
<dbReference type="SMR" id="B9KMC3"/>
<dbReference type="GeneID" id="67447544"/>
<dbReference type="KEGG" id="rsk:RSKD131_2154"/>
<dbReference type="HOGENOM" id="CLU_080136_0_0_5"/>
<dbReference type="UniPathway" id="UPA00539"/>
<dbReference type="GO" id="GO:0033732">
    <property type="term" value="F:pyrroloquinoline-quinone synthase activity"/>
    <property type="evidence" value="ECO:0007669"/>
    <property type="project" value="UniProtKB-EC"/>
</dbReference>
<dbReference type="GO" id="GO:0018189">
    <property type="term" value="P:pyrroloquinoline quinone biosynthetic process"/>
    <property type="evidence" value="ECO:0007669"/>
    <property type="project" value="UniProtKB-UniRule"/>
</dbReference>
<dbReference type="GO" id="GO:0006790">
    <property type="term" value="P:sulfur compound metabolic process"/>
    <property type="evidence" value="ECO:0007669"/>
    <property type="project" value="UniProtKB-ARBA"/>
</dbReference>
<dbReference type="Gene3D" id="1.20.910.10">
    <property type="entry name" value="Heme oxygenase-like"/>
    <property type="match status" value="1"/>
</dbReference>
<dbReference type="HAMAP" id="MF_00654">
    <property type="entry name" value="PQQ_syn_PqqC"/>
    <property type="match status" value="1"/>
</dbReference>
<dbReference type="InterPro" id="IPR016084">
    <property type="entry name" value="Haem_Oase-like_multi-hlx"/>
</dbReference>
<dbReference type="InterPro" id="IPR011845">
    <property type="entry name" value="PqqC"/>
</dbReference>
<dbReference type="InterPro" id="IPR039068">
    <property type="entry name" value="PqqC-like"/>
</dbReference>
<dbReference type="InterPro" id="IPR004305">
    <property type="entry name" value="Thiaminase-2/PQQC"/>
</dbReference>
<dbReference type="NCBIfam" id="TIGR02111">
    <property type="entry name" value="PQQ_syn_pqqC"/>
    <property type="match status" value="1"/>
</dbReference>
<dbReference type="PANTHER" id="PTHR40279:SF3">
    <property type="entry name" value="4-AMINOBENZOATE SYNTHASE"/>
    <property type="match status" value="1"/>
</dbReference>
<dbReference type="PANTHER" id="PTHR40279">
    <property type="entry name" value="PQQC-LIKE PROTEIN"/>
    <property type="match status" value="1"/>
</dbReference>
<dbReference type="Pfam" id="PF03070">
    <property type="entry name" value="TENA_THI-4"/>
    <property type="match status" value="1"/>
</dbReference>
<dbReference type="SUPFAM" id="SSF48613">
    <property type="entry name" value="Heme oxygenase-like"/>
    <property type="match status" value="1"/>
</dbReference>
<sequence>MSLDLSTSLSPARPLESADAMEERLREIGAARYHDRHPFHHMLHGGELTRGQVQAWALNRYYYQCTIPVKDAVVISRFRDRATRIEWRHRLEDHDGAEGAEGGIDRWLILTDGLGLDRAYVESTEGILPATRFAVEAYVHFVRDRSPLEAIASCLTELFAPNIHATRISGMLSHYDFINPTVMAYFQRRLTQAPRDADYALRYVREHARTPEERAAVCNALIFKTQVLWTQLDALHHAYVLGHVPPGAFVPEEMR</sequence>
<organism>
    <name type="scientific">Cereibacter sphaeroides (strain KD131 / KCTC 12085)</name>
    <name type="common">Rhodobacter sphaeroides</name>
    <dbReference type="NCBI Taxonomy" id="557760"/>
    <lineage>
        <taxon>Bacteria</taxon>
        <taxon>Pseudomonadati</taxon>
        <taxon>Pseudomonadota</taxon>
        <taxon>Alphaproteobacteria</taxon>
        <taxon>Rhodobacterales</taxon>
        <taxon>Paracoccaceae</taxon>
        <taxon>Cereibacter</taxon>
    </lineage>
</organism>